<comment type="function">
    <text evidence="1">Component of the spliceosome and rRNA processing machinery. In association with the spliceosomal U4/U6.U5 tri-snRNP particle, required for splicing of pre-mRNA (By similarity).</text>
</comment>
<comment type="subunit">
    <text evidence="1">Component of the 25S U4/U6.U5 tri-snRNP particle, a subcomplex of the spliceosome.</text>
</comment>
<comment type="subcellular location">
    <subcellularLocation>
        <location evidence="1">Nucleus</location>
    </subcellularLocation>
</comment>
<comment type="similarity">
    <text evidence="3">Belongs to the SPP381 family.</text>
</comment>
<proteinExistence type="inferred from homology"/>
<organism>
    <name type="scientific">Kluyveromyces lactis (strain ATCC 8585 / CBS 2359 / DSM 70799 / NBRC 1267 / NRRL Y-1140 / WM37)</name>
    <name type="common">Yeast</name>
    <name type="synonym">Candida sphaerica</name>
    <dbReference type="NCBI Taxonomy" id="284590"/>
    <lineage>
        <taxon>Eukaryota</taxon>
        <taxon>Fungi</taxon>
        <taxon>Dikarya</taxon>
        <taxon>Ascomycota</taxon>
        <taxon>Saccharomycotina</taxon>
        <taxon>Saccharomycetes</taxon>
        <taxon>Saccharomycetales</taxon>
        <taxon>Saccharomycetaceae</taxon>
        <taxon>Kluyveromyces</taxon>
    </lineage>
</organism>
<gene>
    <name type="primary">SPP381</name>
    <name type="ordered locus">KLLA0F21142g</name>
</gene>
<name>SP381_KLULA</name>
<protein>
    <recommendedName>
        <fullName>Pre-mRNA-splicing factor SPP381</fullName>
    </recommendedName>
</protein>
<reference key="1">
    <citation type="journal article" date="2004" name="Nature">
        <title>Genome evolution in yeasts.</title>
        <authorList>
            <person name="Dujon B."/>
            <person name="Sherman D."/>
            <person name="Fischer G."/>
            <person name="Durrens P."/>
            <person name="Casaregola S."/>
            <person name="Lafontaine I."/>
            <person name="de Montigny J."/>
            <person name="Marck C."/>
            <person name="Neuveglise C."/>
            <person name="Talla E."/>
            <person name="Goffard N."/>
            <person name="Frangeul L."/>
            <person name="Aigle M."/>
            <person name="Anthouard V."/>
            <person name="Babour A."/>
            <person name="Barbe V."/>
            <person name="Barnay S."/>
            <person name="Blanchin S."/>
            <person name="Beckerich J.-M."/>
            <person name="Beyne E."/>
            <person name="Bleykasten C."/>
            <person name="Boisrame A."/>
            <person name="Boyer J."/>
            <person name="Cattolico L."/>
            <person name="Confanioleri F."/>
            <person name="de Daruvar A."/>
            <person name="Despons L."/>
            <person name="Fabre E."/>
            <person name="Fairhead C."/>
            <person name="Ferry-Dumazet H."/>
            <person name="Groppi A."/>
            <person name="Hantraye F."/>
            <person name="Hennequin C."/>
            <person name="Jauniaux N."/>
            <person name="Joyet P."/>
            <person name="Kachouri R."/>
            <person name="Kerrest A."/>
            <person name="Koszul R."/>
            <person name="Lemaire M."/>
            <person name="Lesur I."/>
            <person name="Ma L."/>
            <person name="Muller H."/>
            <person name="Nicaud J.-M."/>
            <person name="Nikolski M."/>
            <person name="Oztas S."/>
            <person name="Ozier-Kalogeropoulos O."/>
            <person name="Pellenz S."/>
            <person name="Potier S."/>
            <person name="Richard G.-F."/>
            <person name="Straub M.-L."/>
            <person name="Suleau A."/>
            <person name="Swennen D."/>
            <person name="Tekaia F."/>
            <person name="Wesolowski-Louvel M."/>
            <person name="Westhof E."/>
            <person name="Wirth B."/>
            <person name="Zeniou-Meyer M."/>
            <person name="Zivanovic Y."/>
            <person name="Bolotin-Fukuhara M."/>
            <person name="Thierry A."/>
            <person name="Bouchier C."/>
            <person name="Caudron B."/>
            <person name="Scarpelli C."/>
            <person name="Gaillardin C."/>
            <person name="Weissenbach J."/>
            <person name="Wincker P."/>
            <person name="Souciet J.-L."/>
        </authorList>
    </citation>
    <scope>NUCLEOTIDE SEQUENCE [LARGE SCALE GENOMIC DNA]</scope>
    <source>
        <strain>ATCC 8585 / CBS 2359 / DSM 70799 / NBRC 1267 / NRRL Y-1140 / WM37</strain>
    </source>
</reference>
<dbReference type="EMBL" id="CR382126">
    <property type="protein sequence ID" value="CAG98737.1"/>
    <property type="molecule type" value="Genomic_DNA"/>
</dbReference>
<dbReference type="RefSeq" id="XP_456029.1">
    <property type="nucleotide sequence ID" value="XM_456029.1"/>
</dbReference>
<dbReference type="SMR" id="Q6CJ60"/>
<dbReference type="FunCoup" id="Q6CJ60">
    <property type="interactions" value="162"/>
</dbReference>
<dbReference type="STRING" id="284590.Q6CJ60"/>
<dbReference type="PaxDb" id="284590-Q6CJ60"/>
<dbReference type="KEGG" id="kla:KLLA0_F21142g"/>
<dbReference type="eggNOG" id="ENOG502S80M">
    <property type="taxonomic scope" value="Eukaryota"/>
</dbReference>
<dbReference type="HOGENOM" id="CLU_1061961_0_0_1"/>
<dbReference type="InParanoid" id="Q6CJ60"/>
<dbReference type="OMA" id="WFERQNE"/>
<dbReference type="Proteomes" id="UP000000598">
    <property type="component" value="Chromosome F"/>
</dbReference>
<dbReference type="GO" id="GO:0005681">
    <property type="term" value="C:spliceosomal complex"/>
    <property type="evidence" value="ECO:0007669"/>
    <property type="project" value="UniProtKB-KW"/>
</dbReference>
<dbReference type="GO" id="GO:0003723">
    <property type="term" value="F:RNA binding"/>
    <property type="evidence" value="ECO:0007669"/>
    <property type="project" value="UniProtKB-KW"/>
</dbReference>
<dbReference type="GO" id="GO:0006397">
    <property type="term" value="P:mRNA processing"/>
    <property type="evidence" value="ECO:0007669"/>
    <property type="project" value="UniProtKB-KW"/>
</dbReference>
<dbReference type="GO" id="GO:0008380">
    <property type="term" value="P:RNA splicing"/>
    <property type="evidence" value="ECO:0007669"/>
    <property type="project" value="UniProtKB-KW"/>
</dbReference>
<dbReference type="InterPro" id="IPR033194">
    <property type="entry name" value="MFAP1"/>
</dbReference>
<dbReference type="InterPro" id="IPR009730">
    <property type="entry name" value="MFAP1_C"/>
</dbReference>
<dbReference type="PANTHER" id="PTHR15327">
    <property type="entry name" value="MICROFIBRIL-ASSOCIATED PROTEIN"/>
    <property type="match status" value="1"/>
</dbReference>
<dbReference type="Pfam" id="PF06991">
    <property type="entry name" value="MFAP1"/>
    <property type="match status" value="1"/>
</dbReference>
<sequence length="262" mass="29640">MAIRHFKKQVQESSDSENSSSDEKSTTARDDNYSSNPMNESELHLSTKANSDSDSGKDGPDSSSSSSSSSSSSSDDEVTLHKPVFLKRKRKDEQNQPEETGENGSLVRAAYLAKALRQKQYTENIVASETSDQSILSQIIAIDDTDNTNPEQEQLQWEQRQQARLKRERQKKLDKQLLIEEQEMQRASQLSKVDDPWLKELDLNDDSNLNSFDLKASSRNRHPVNSKKDISIPARLQKGQLQLASSHTNNDTEDTEYGYIEE</sequence>
<accession>Q6CJ60</accession>
<evidence type="ECO:0000250" key="1"/>
<evidence type="ECO:0000256" key="2">
    <source>
        <dbReference type="SAM" id="MobiDB-lite"/>
    </source>
</evidence>
<evidence type="ECO:0000305" key="3"/>
<feature type="chain" id="PRO_0000324506" description="Pre-mRNA-splicing factor SPP381">
    <location>
        <begin position="1"/>
        <end position="262"/>
    </location>
</feature>
<feature type="region of interest" description="Disordered" evidence="2">
    <location>
        <begin position="1"/>
        <end position="106"/>
    </location>
</feature>
<feature type="region of interest" description="Disordered" evidence="2">
    <location>
        <begin position="141"/>
        <end position="160"/>
    </location>
</feature>
<feature type="region of interest" description="Disordered" evidence="2">
    <location>
        <begin position="202"/>
        <end position="262"/>
    </location>
</feature>
<feature type="compositionally biased region" description="Basic and acidic residues" evidence="2">
    <location>
        <begin position="21"/>
        <end position="32"/>
    </location>
</feature>
<feature type="compositionally biased region" description="Low complexity" evidence="2">
    <location>
        <begin position="61"/>
        <end position="73"/>
    </location>
</feature>
<feature type="compositionally biased region" description="Low complexity" evidence="2">
    <location>
        <begin position="151"/>
        <end position="160"/>
    </location>
</feature>
<feature type="compositionally biased region" description="Polar residues" evidence="2">
    <location>
        <begin position="239"/>
        <end position="249"/>
    </location>
</feature>
<feature type="compositionally biased region" description="Acidic residues" evidence="2">
    <location>
        <begin position="251"/>
        <end position="262"/>
    </location>
</feature>
<keyword id="KW-0507">mRNA processing</keyword>
<keyword id="KW-0508">mRNA splicing</keyword>
<keyword id="KW-0539">Nucleus</keyword>
<keyword id="KW-1185">Reference proteome</keyword>
<keyword id="KW-0687">Ribonucleoprotein</keyword>
<keyword id="KW-0694">RNA-binding</keyword>
<keyword id="KW-0747">Spliceosome</keyword>